<comment type="function">
    <text evidence="1">Involved in the binding of tRNA to the ribosomes.</text>
</comment>
<comment type="subunit">
    <text evidence="1">Part of the 30S ribosomal subunit.</text>
</comment>
<comment type="similarity">
    <text evidence="1">Belongs to the universal ribosomal protein uS10 family.</text>
</comment>
<reference key="1">
    <citation type="journal article" date="2000" name="Nature">
        <title>Complete DNA sequence of a serogroup A strain of Neisseria meningitidis Z2491.</title>
        <authorList>
            <person name="Parkhill J."/>
            <person name="Achtman M."/>
            <person name="James K.D."/>
            <person name="Bentley S.D."/>
            <person name="Churcher C.M."/>
            <person name="Klee S.R."/>
            <person name="Morelli G."/>
            <person name="Basham D."/>
            <person name="Brown D."/>
            <person name="Chillingworth T."/>
            <person name="Davies R.M."/>
            <person name="Davis P."/>
            <person name="Devlin K."/>
            <person name="Feltwell T."/>
            <person name="Hamlin N."/>
            <person name="Holroyd S."/>
            <person name="Jagels K."/>
            <person name="Leather S."/>
            <person name="Moule S."/>
            <person name="Mungall K.L."/>
            <person name="Quail M.A."/>
            <person name="Rajandream M.A."/>
            <person name="Rutherford K.M."/>
            <person name="Simmonds M."/>
            <person name="Skelton J."/>
            <person name="Whitehead S."/>
            <person name="Spratt B.G."/>
            <person name="Barrell B.G."/>
        </authorList>
    </citation>
    <scope>NUCLEOTIDE SEQUENCE [LARGE SCALE GENOMIC DNA]</scope>
    <source>
        <strain>DSM 15465 / Z2491</strain>
    </source>
</reference>
<keyword id="KW-0687">Ribonucleoprotein</keyword>
<keyword id="KW-0689">Ribosomal protein</keyword>
<accession>P66332</accession>
<accession>A1INZ4</accession>
<accession>Q9JR21</accession>
<feature type="chain" id="PRO_0000146563" description="Small ribosomal subunit protein uS10">
    <location>
        <begin position="1"/>
        <end position="103"/>
    </location>
</feature>
<organism>
    <name type="scientific">Neisseria meningitidis serogroup A / serotype 4A (strain DSM 15465 / Z2491)</name>
    <dbReference type="NCBI Taxonomy" id="122587"/>
    <lineage>
        <taxon>Bacteria</taxon>
        <taxon>Pseudomonadati</taxon>
        <taxon>Pseudomonadota</taxon>
        <taxon>Betaproteobacteria</taxon>
        <taxon>Neisseriales</taxon>
        <taxon>Neisseriaceae</taxon>
        <taxon>Neisseria</taxon>
    </lineage>
</organism>
<sequence>MANQKIRIRLKAYDYALIDRSAQEIVETAKRTGAVVKGPIPLPTKIERFNILRSPHVNKTSREQLEIRTHLRLMDIVDWTDKTTDALMKLDLPAGVDVEIKVQ</sequence>
<dbReference type="EMBL" id="AL157959">
    <property type="protein sequence ID" value="CAM07451.1"/>
    <property type="molecule type" value="Genomic_DNA"/>
</dbReference>
<dbReference type="RefSeq" id="WP_002215394.1">
    <property type="nucleotide sequence ID" value="NC_003116.1"/>
</dbReference>
<dbReference type="SMR" id="P66332"/>
<dbReference type="EnsemblBacteria" id="CAM07451">
    <property type="protein sequence ID" value="CAM07451"/>
    <property type="gene ID" value="NMA0133"/>
</dbReference>
<dbReference type="GeneID" id="93387214"/>
<dbReference type="KEGG" id="nma:NMA0133"/>
<dbReference type="HOGENOM" id="CLU_122625_1_3_4"/>
<dbReference type="Proteomes" id="UP000000626">
    <property type="component" value="Chromosome"/>
</dbReference>
<dbReference type="GO" id="GO:1990904">
    <property type="term" value="C:ribonucleoprotein complex"/>
    <property type="evidence" value="ECO:0007669"/>
    <property type="project" value="UniProtKB-KW"/>
</dbReference>
<dbReference type="GO" id="GO:0005840">
    <property type="term" value="C:ribosome"/>
    <property type="evidence" value="ECO:0007669"/>
    <property type="project" value="UniProtKB-KW"/>
</dbReference>
<dbReference type="GO" id="GO:0003735">
    <property type="term" value="F:structural constituent of ribosome"/>
    <property type="evidence" value="ECO:0007669"/>
    <property type="project" value="InterPro"/>
</dbReference>
<dbReference type="GO" id="GO:0000049">
    <property type="term" value="F:tRNA binding"/>
    <property type="evidence" value="ECO:0007669"/>
    <property type="project" value="UniProtKB-UniRule"/>
</dbReference>
<dbReference type="GO" id="GO:0006412">
    <property type="term" value="P:translation"/>
    <property type="evidence" value="ECO:0007669"/>
    <property type="project" value="UniProtKB-UniRule"/>
</dbReference>
<dbReference type="FunFam" id="3.30.70.600:FF:000001">
    <property type="entry name" value="30S ribosomal protein S10"/>
    <property type="match status" value="1"/>
</dbReference>
<dbReference type="Gene3D" id="3.30.70.600">
    <property type="entry name" value="Ribosomal protein S10 domain"/>
    <property type="match status" value="1"/>
</dbReference>
<dbReference type="HAMAP" id="MF_00508">
    <property type="entry name" value="Ribosomal_uS10"/>
    <property type="match status" value="1"/>
</dbReference>
<dbReference type="InterPro" id="IPR001848">
    <property type="entry name" value="Ribosomal_uS10"/>
</dbReference>
<dbReference type="InterPro" id="IPR018268">
    <property type="entry name" value="Ribosomal_uS10_CS"/>
</dbReference>
<dbReference type="InterPro" id="IPR027486">
    <property type="entry name" value="Ribosomal_uS10_dom"/>
</dbReference>
<dbReference type="InterPro" id="IPR036838">
    <property type="entry name" value="Ribosomal_uS10_dom_sf"/>
</dbReference>
<dbReference type="NCBIfam" id="NF001861">
    <property type="entry name" value="PRK00596.1"/>
    <property type="match status" value="1"/>
</dbReference>
<dbReference type="NCBIfam" id="TIGR01049">
    <property type="entry name" value="rpsJ_bact"/>
    <property type="match status" value="1"/>
</dbReference>
<dbReference type="PANTHER" id="PTHR11700">
    <property type="entry name" value="30S RIBOSOMAL PROTEIN S10 FAMILY MEMBER"/>
    <property type="match status" value="1"/>
</dbReference>
<dbReference type="Pfam" id="PF00338">
    <property type="entry name" value="Ribosomal_S10"/>
    <property type="match status" value="1"/>
</dbReference>
<dbReference type="PRINTS" id="PR00971">
    <property type="entry name" value="RIBOSOMALS10"/>
</dbReference>
<dbReference type="SMART" id="SM01403">
    <property type="entry name" value="Ribosomal_S10"/>
    <property type="match status" value="1"/>
</dbReference>
<dbReference type="SUPFAM" id="SSF54999">
    <property type="entry name" value="Ribosomal protein S10"/>
    <property type="match status" value="1"/>
</dbReference>
<dbReference type="PROSITE" id="PS00361">
    <property type="entry name" value="RIBOSOMAL_S10"/>
    <property type="match status" value="1"/>
</dbReference>
<evidence type="ECO:0000255" key="1">
    <source>
        <dbReference type="HAMAP-Rule" id="MF_00508"/>
    </source>
</evidence>
<evidence type="ECO:0000305" key="2"/>
<protein>
    <recommendedName>
        <fullName evidence="1">Small ribosomal subunit protein uS10</fullName>
    </recommendedName>
    <alternativeName>
        <fullName evidence="2">30S ribosomal protein S10</fullName>
    </alternativeName>
</protein>
<proteinExistence type="inferred from homology"/>
<gene>
    <name evidence="1" type="primary">rpsJ</name>
    <name type="ordered locus">NMA0133</name>
</gene>
<name>RS10_NEIMA</name>